<comment type="function">
    <text evidence="1">This protein binds to 23S rRNA in the presence of protein L20.</text>
</comment>
<comment type="subunit">
    <text evidence="1">Part of the 50S ribosomal subunit. Contacts protein L20.</text>
</comment>
<comment type="similarity">
    <text evidence="1">Belongs to the bacterial ribosomal protein bL21 family.</text>
</comment>
<organism>
    <name type="scientific">Geotalea uraniireducens (strain Rf4)</name>
    <name type="common">Geobacter uraniireducens</name>
    <dbReference type="NCBI Taxonomy" id="351605"/>
    <lineage>
        <taxon>Bacteria</taxon>
        <taxon>Pseudomonadati</taxon>
        <taxon>Thermodesulfobacteriota</taxon>
        <taxon>Desulfuromonadia</taxon>
        <taxon>Geobacterales</taxon>
        <taxon>Geobacteraceae</taxon>
        <taxon>Geotalea</taxon>
    </lineage>
</organism>
<name>RL21_GEOUR</name>
<sequence length="102" mass="11179">MYAVVRTGGKQYKVSEGDFLKVEKLEGAVGDTVELSEVLMVGGDKVAIGTPLVPSASVVGKIVEQGKDKKILVFKSKRRKDSRKLNGHRQLRTILKIEKINA</sequence>
<feature type="chain" id="PRO_1000086982" description="Large ribosomal subunit protein bL21">
    <location>
        <begin position="1"/>
        <end position="102"/>
    </location>
</feature>
<dbReference type="EMBL" id="CP000698">
    <property type="protein sequence ID" value="ABQ24520.1"/>
    <property type="molecule type" value="Genomic_DNA"/>
</dbReference>
<dbReference type="RefSeq" id="WP_011937247.1">
    <property type="nucleotide sequence ID" value="NC_009483.1"/>
</dbReference>
<dbReference type="SMR" id="A5GD27"/>
<dbReference type="STRING" id="351605.Gura_0304"/>
<dbReference type="KEGG" id="gur:Gura_0304"/>
<dbReference type="HOGENOM" id="CLU_061463_3_2_7"/>
<dbReference type="OrthoDB" id="9813334at2"/>
<dbReference type="Proteomes" id="UP000006695">
    <property type="component" value="Chromosome"/>
</dbReference>
<dbReference type="GO" id="GO:0005737">
    <property type="term" value="C:cytoplasm"/>
    <property type="evidence" value="ECO:0007669"/>
    <property type="project" value="UniProtKB-ARBA"/>
</dbReference>
<dbReference type="GO" id="GO:1990904">
    <property type="term" value="C:ribonucleoprotein complex"/>
    <property type="evidence" value="ECO:0007669"/>
    <property type="project" value="UniProtKB-KW"/>
</dbReference>
<dbReference type="GO" id="GO:0005840">
    <property type="term" value="C:ribosome"/>
    <property type="evidence" value="ECO:0007669"/>
    <property type="project" value="UniProtKB-KW"/>
</dbReference>
<dbReference type="GO" id="GO:0019843">
    <property type="term" value="F:rRNA binding"/>
    <property type="evidence" value="ECO:0007669"/>
    <property type="project" value="UniProtKB-UniRule"/>
</dbReference>
<dbReference type="GO" id="GO:0003735">
    <property type="term" value="F:structural constituent of ribosome"/>
    <property type="evidence" value="ECO:0007669"/>
    <property type="project" value="InterPro"/>
</dbReference>
<dbReference type="GO" id="GO:0006412">
    <property type="term" value="P:translation"/>
    <property type="evidence" value="ECO:0007669"/>
    <property type="project" value="UniProtKB-UniRule"/>
</dbReference>
<dbReference type="HAMAP" id="MF_01363">
    <property type="entry name" value="Ribosomal_bL21"/>
    <property type="match status" value="1"/>
</dbReference>
<dbReference type="InterPro" id="IPR028909">
    <property type="entry name" value="bL21-like"/>
</dbReference>
<dbReference type="InterPro" id="IPR036164">
    <property type="entry name" value="bL21-like_sf"/>
</dbReference>
<dbReference type="InterPro" id="IPR001787">
    <property type="entry name" value="Ribosomal_bL21"/>
</dbReference>
<dbReference type="InterPro" id="IPR018258">
    <property type="entry name" value="Ribosomal_bL21_CS"/>
</dbReference>
<dbReference type="NCBIfam" id="TIGR00061">
    <property type="entry name" value="L21"/>
    <property type="match status" value="1"/>
</dbReference>
<dbReference type="PANTHER" id="PTHR21349">
    <property type="entry name" value="50S RIBOSOMAL PROTEIN L21"/>
    <property type="match status" value="1"/>
</dbReference>
<dbReference type="PANTHER" id="PTHR21349:SF0">
    <property type="entry name" value="LARGE RIBOSOMAL SUBUNIT PROTEIN BL21M"/>
    <property type="match status" value="1"/>
</dbReference>
<dbReference type="Pfam" id="PF00829">
    <property type="entry name" value="Ribosomal_L21p"/>
    <property type="match status" value="1"/>
</dbReference>
<dbReference type="SUPFAM" id="SSF141091">
    <property type="entry name" value="L21p-like"/>
    <property type="match status" value="1"/>
</dbReference>
<dbReference type="PROSITE" id="PS01169">
    <property type="entry name" value="RIBOSOMAL_L21"/>
    <property type="match status" value="1"/>
</dbReference>
<gene>
    <name evidence="1" type="primary">rplU</name>
    <name type="ordered locus">Gura_0304</name>
</gene>
<evidence type="ECO:0000255" key="1">
    <source>
        <dbReference type="HAMAP-Rule" id="MF_01363"/>
    </source>
</evidence>
<evidence type="ECO:0000305" key="2"/>
<keyword id="KW-1185">Reference proteome</keyword>
<keyword id="KW-0687">Ribonucleoprotein</keyword>
<keyword id="KW-0689">Ribosomal protein</keyword>
<keyword id="KW-0694">RNA-binding</keyword>
<keyword id="KW-0699">rRNA-binding</keyword>
<proteinExistence type="inferred from homology"/>
<protein>
    <recommendedName>
        <fullName evidence="1">Large ribosomal subunit protein bL21</fullName>
    </recommendedName>
    <alternativeName>
        <fullName evidence="2">50S ribosomal protein L21</fullName>
    </alternativeName>
</protein>
<accession>A5GD27</accession>
<reference key="1">
    <citation type="submission" date="2007-05" db="EMBL/GenBank/DDBJ databases">
        <title>Complete sequence of Geobacter uraniireducens Rf4.</title>
        <authorList>
            <consortium name="US DOE Joint Genome Institute"/>
            <person name="Copeland A."/>
            <person name="Lucas S."/>
            <person name="Lapidus A."/>
            <person name="Barry K."/>
            <person name="Detter J.C."/>
            <person name="Glavina del Rio T."/>
            <person name="Hammon N."/>
            <person name="Israni S."/>
            <person name="Dalin E."/>
            <person name="Tice H."/>
            <person name="Pitluck S."/>
            <person name="Chertkov O."/>
            <person name="Brettin T."/>
            <person name="Bruce D."/>
            <person name="Han C."/>
            <person name="Schmutz J."/>
            <person name="Larimer F."/>
            <person name="Land M."/>
            <person name="Hauser L."/>
            <person name="Kyrpides N."/>
            <person name="Mikhailova N."/>
            <person name="Shelobolina E."/>
            <person name="Aklujkar M."/>
            <person name="Lovley D."/>
            <person name="Richardson P."/>
        </authorList>
    </citation>
    <scope>NUCLEOTIDE SEQUENCE [LARGE SCALE GENOMIC DNA]</scope>
    <source>
        <strain>ATCC BAA-1134 / JCM 13001 / Rf4</strain>
    </source>
</reference>